<name>CPGS_PYRHO</name>
<reference key="1">
    <citation type="journal article" date="1998" name="DNA Res.">
        <title>Complete sequence and gene organization of the genome of a hyper-thermophilic archaebacterium, Pyrococcus horikoshii OT3.</title>
        <authorList>
            <person name="Kawarabayasi Y."/>
            <person name="Sawada M."/>
            <person name="Horikawa H."/>
            <person name="Haikawa Y."/>
            <person name="Hino Y."/>
            <person name="Yamamoto S."/>
            <person name="Sekine M."/>
            <person name="Baba S."/>
            <person name="Kosugi H."/>
            <person name="Hosoyama A."/>
            <person name="Nagai Y."/>
            <person name="Sakai M."/>
            <person name="Ogura K."/>
            <person name="Otsuka R."/>
            <person name="Nakazawa H."/>
            <person name="Takamiya M."/>
            <person name="Ohfuku Y."/>
            <person name="Funahashi T."/>
            <person name="Tanaka T."/>
            <person name="Kudoh Y."/>
            <person name="Yamazaki J."/>
            <person name="Kushida N."/>
            <person name="Oguchi A."/>
            <person name="Aoki K."/>
            <person name="Yoshizawa T."/>
            <person name="Nakamura Y."/>
            <person name="Robb F.T."/>
            <person name="Horikoshi K."/>
            <person name="Masuchi Y."/>
            <person name="Shizuya H."/>
            <person name="Kikuchi H."/>
        </authorList>
    </citation>
    <scope>NUCLEOTIDE SEQUENCE [LARGE SCALE GENOMIC DNA]</scope>
    <source>
        <strain>ATCC 700860 / DSM 12428 / JCM 9974 / NBRC 100139 / OT-3</strain>
    </source>
</reference>
<protein>
    <recommendedName>
        <fullName evidence="1">Cyclic 2,3-diphosphoglycerate synthetase</fullName>
        <shortName evidence="1">cDPGS</shortName>
        <ecNumber evidence="1">6.5.1.9</ecNumber>
    </recommendedName>
</protein>
<comment type="function">
    <text evidence="1">Catalyzes the formation of cyclic 2,3-diphosphoglycerate (cDPG) by formation of an intramolecular phosphoanhydride bond at the expense of ATP.</text>
</comment>
<comment type="catalytic activity">
    <reaction evidence="1">
        <text>(2R)-2,3-bisphosphoglycerate + ATP + H(+) = cyclic (2R)-2,3-bisphosphoglycerate + ADP + phosphate</text>
        <dbReference type="Rhea" id="RHEA:42412"/>
        <dbReference type="ChEBI" id="CHEBI:15378"/>
        <dbReference type="ChEBI" id="CHEBI:30616"/>
        <dbReference type="ChEBI" id="CHEBI:43474"/>
        <dbReference type="ChEBI" id="CHEBI:58248"/>
        <dbReference type="ChEBI" id="CHEBI:79081"/>
        <dbReference type="ChEBI" id="CHEBI:456216"/>
        <dbReference type="EC" id="6.5.1.9"/>
    </reaction>
</comment>
<comment type="subcellular location">
    <subcellularLocation>
        <location evidence="1">Cytoplasm</location>
    </subcellularLocation>
</comment>
<comment type="similarity">
    <text evidence="1">Belongs to the cyclic 2,3-diphosphoglycerate synthetase family.</text>
</comment>
<accession>O74083</accession>
<accession>O57881</accession>
<gene>
    <name evidence="1" type="primary">cpgS</name>
    <name type="ordered locus">PH0150</name>
</gene>
<organism>
    <name type="scientific">Pyrococcus horikoshii (strain ATCC 700860 / DSM 12428 / JCM 9974 / NBRC 100139 / OT-3)</name>
    <dbReference type="NCBI Taxonomy" id="70601"/>
    <lineage>
        <taxon>Archaea</taxon>
        <taxon>Methanobacteriati</taxon>
        <taxon>Methanobacteriota</taxon>
        <taxon>Thermococci</taxon>
        <taxon>Thermococcales</taxon>
        <taxon>Thermococcaceae</taxon>
        <taxon>Pyrococcus</taxon>
    </lineage>
</organism>
<dbReference type="EC" id="6.5.1.9" evidence="1"/>
<dbReference type="EMBL" id="BA000001">
    <property type="protein sequence ID" value="BAA29219.1"/>
    <property type="molecule type" value="Genomic_DNA"/>
</dbReference>
<dbReference type="PIR" id="D71236">
    <property type="entry name" value="D71236"/>
</dbReference>
<dbReference type="SMR" id="O74083"/>
<dbReference type="STRING" id="70601.gene:9377060"/>
<dbReference type="EnsemblBacteria" id="BAA29219">
    <property type="protein sequence ID" value="BAA29219"/>
    <property type="gene ID" value="BAA29219"/>
</dbReference>
<dbReference type="KEGG" id="pho:PH0150"/>
<dbReference type="eggNOG" id="arCOG01230">
    <property type="taxonomic scope" value="Archaea"/>
</dbReference>
<dbReference type="Proteomes" id="UP000000752">
    <property type="component" value="Chromosome"/>
</dbReference>
<dbReference type="GO" id="GO:0005737">
    <property type="term" value="C:cytoplasm"/>
    <property type="evidence" value="ECO:0007669"/>
    <property type="project" value="UniProtKB-SubCell"/>
</dbReference>
<dbReference type="GO" id="GO:0005524">
    <property type="term" value="F:ATP binding"/>
    <property type="evidence" value="ECO:0007669"/>
    <property type="project" value="UniProtKB-KW"/>
</dbReference>
<dbReference type="GO" id="GO:0036356">
    <property type="term" value="F:cyclic 2,3-diphosphoglycerate synthetase activity"/>
    <property type="evidence" value="ECO:0007669"/>
    <property type="project" value="InterPro"/>
</dbReference>
<dbReference type="GO" id="GO:0016874">
    <property type="term" value="F:ligase activity"/>
    <property type="evidence" value="ECO:0007669"/>
    <property type="project" value="UniProtKB-UniRule"/>
</dbReference>
<dbReference type="GO" id="GO:0006094">
    <property type="term" value="P:gluconeogenesis"/>
    <property type="evidence" value="ECO:0007669"/>
    <property type="project" value="InterPro"/>
</dbReference>
<dbReference type="Gene3D" id="3.40.50.300">
    <property type="entry name" value="P-loop containing nucleotide triphosphate hydrolases"/>
    <property type="match status" value="1"/>
</dbReference>
<dbReference type="HAMAP" id="MF_01908">
    <property type="entry name" value="Cyc_PG_syn"/>
    <property type="match status" value="1"/>
</dbReference>
<dbReference type="InterPro" id="IPR016557">
    <property type="entry name" value="Cyc_diphosphoglycerate_synth"/>
</dbReference>
<dbReference type="InterPro" id="IPR027417">
    <property type="entry name" value="P-loop_NTPase"/>
</dbReference>
<dbReference type="PIRSF" id="PIRSF009445">
    <property type="entry name" value="Cyc_PG_syn"/>
    <property type="match status" value="1"/>
</dbReference>
<sequence>MGYAMRLALIDGEHYPDVNRWALEKLKVDCAVFVGGMEKIGSIRDVERTLSIKLYYDEDIFKALERAIEENEIREVIDLSDEPVLTPEIRFRIASFLLKRGITYIGADFEFKPKEWIKIDVPSINIIGTGKRIGKTAIGGFVGRTLKEEYKVVIVTMGRGGPESPEVIRGDLMEITPEFLVEVSEKGRHAASDHFEDALTAGVATVGCRRCGGGLAGFTFLDVLQKGIEVAKSLNPEIIVFEGSGASFANVLSEGFITVVSALQGKEIKMYLYPLRISLGDLIVVTMADEVKDPGKISSLIKEINPDADIHLTRFSPRLIGNVEGKAVVVTTSTNSAKRVTKELEDRGIDVVGFSGNLANRVKLREELKKVSYDTLIVELKAGAVDVAIKSALRSGKRIVFLDYEPKNIDDKDLRESVKELARRIVNDKGHRKGR</sequence>
<keyword id="KW-0067">ATP-binding</keyword>
<keyword id="KW-0963">Cytoplasm</keyword>
<keyword id="KW-0436">Ligase</keyword>
<keyword id="KW-0547">Nucleotide-binding</keyword>
<feature type="chain" id="PRO_0000313696" description="Cyclic 2,3-diphosphoglycerate synthetase">
    <location>
        <begin position="1"/>
        <end position="435"/>
    </location>
</feature>
<evidence type="ECO:0000255" key="1">
    <source>
        <dbReference type="HAMAP-Rule" id="MF_01908"/>
    </source>
</evidence>
<proteinExistence type="inferred from homology"/>